<organism>
    <name type="scientific">Variovorax paradoxus (strain S110)</name>
    <dbReference type="NCBI Taxonomy" id="543728"/>
    <lineage>
        <taxon>Bacteria</taxon>
        <taxon>Pseudomonadati</taxon>
        <taxon>Pseudomonadota</taxon>
        <taxon>Betaproteobacteria</taxon>
        <taxon>Burkholderiales</taxon>
        <taxon>Comamonadaceae</taxon>
        <taxon>Variovorax</taxon>
    </lineage>
</organism>
<evidence type="ECO:0000255" key="1">
    <source>
        <dbReference type="HAMAP-Rule" id="MF_01838"/>
    </source>
</evidence>
<protein>
    <recommendedName>
        <fullName evidence="1">Enoyl-[acyl-carrier-protein] reductase [NADH]</fullName>
        <shortName evidence="1">ENR</shortName>
        <ecNumber evidence="1">1.3.1.9</ecNumber>
    </recommendedName>
</protein>
<feature type="chain" id="PRO_1000216090" description="Enoyl-[acyl-carrier-protein] reductase [NADH]">
    <location>
        <begin position="1"/>
        <end position="398"/>
    </location>
</feature>
<feature type="active site" description="Proton donor" evidence="1">
    <location>
        <position position="235"/>
    </location>
</feature>
<feature type="binding site" evidence="1">
    <location>
        <begin position="48"/>
        <end position="53"/>
    </location>
    <ligand>
        <name>NAD(+)</name>
        <dbReference type="ChEBI" id="CHEBI:57540"/>
    </ligand>
</feature>
<feature type="binding site" evidence="1">
    <location>
        <begin position="74"/>
        <end position="75"/>
    </location>
    <ligand>
        <name>NAD(+)</name>
        <dbReference type="ChEBI" id="CHEBI:57540"/>
    </ligand>
</feature>
<feature type="binding site" evidence="1">
    <location>
        <begin position="111"/>
        <end position="112"/>
    </location>
    <ligand>
        <name>NAD(+)</name>
        <dbReference type="ChEBI" id="CHEBI:57540"/>
    </ligand>
</feature>
<feature type="binding site" evidence="1">
    <location>
        <begin position="139"/>
        <end position="140"/>
    </location>
    <ligand>
        <name>NAD(+)</name>
        <dbReference type="ChEBI" id="CHEBI:57540"/>
    </ligand>
</feature>
<feature type="binding site" evidence="1">
    <location>
        <position position="225"/>
    </location>
    <ligand>
        <name>substrate</name>
    </ligand>
</feature>
<feature type="binding site" evidence="1">
    <location>
        <position position="244"/>
    </location>
    <ligand>
        <name>NAD(+)</name>
        <dbReference type="ChEBI" id="CHEBI:57540"/>
    </ligand>
</feature>
<feature type="binding site" evidence="1">
    <location>
        <begin position="273"/>
        <end position="275"/>
    </location>
    <ligand>
        <name>NAD(+)</name>
        <dbReference type="ChEBI" id="CHEBI:57540"/>
    </ligand>
</feature>
<feature type="site" description="Plays an important role in discriminating NADH against NADPH" evidence="1">
    <location>
        <position position="75"/>
    </location>
</feature>
<keyword id="KW-0275">Fatty acid biosynthesis</keyword>
<keyword id="KW-0276">Fatty acid metabolism</keyword>
<keyword id="KW-0444">Lipid biosynthesis</keyword>
<keyword id="KW-0443">Lipid metabolism</keyword>
<keyword id="KW-0520">NAD</keyword>
<keyword id="KW-0560">Oxidoreductase</keyword>
<comment type="function">
    <text evidence="1">Involved in the final reduction of the elongation cycle of fatty acid synthesis (FAS II). Catalyzes the reduction of a carbon-carbon double bond in an enoyl moiety that is covalently linked to an acyl carrier protein (ACP).</text>
</comment>
<comment type="catalytic activity">
    <reaction evidence="1">
        <text>a 2,3-saturated acyl-[ACP] + NAD(+) = a (2E)-enoyl-[ACP] + NADH + H(+)</text>
        <dbReference type="Rhea" id="RHEA:10240"/>
        <dbReference type="Rhea" id="RHEA-COMP:9925"/>
        <dbReference type="Rhea" id="RHEA-COMP:9926"/>
        <dbReference type="ChEBI" id="CHEBI:15378"/>
        <dbReference type="ChEBI" id="CHEBI:57540"/>
        <dbReference type="ChEBI" id="CHEBI:57945"/>
        <dbReference type="ChEBI" id="CHEBI:78784"/>
        <dbReference type="ChEBI" id="CHEBI:78785"/>
        <dbReference type="EC" id="1.3.1.9"/>
    </reaction>
</comment>
<comment type="pathway">
    <text evidence="1">Lipid metabolism; fatty acid biosynthesis.</text>
</comment>
<comment type="subunit">
    <text evidence="1">Monomer.</text>
</comment>
<comment type="similarity">
    <text evidence="1">Belongs to the TER reductase family.</text>
</comment>
<sequence length="398" mass="42512">MIIKPRVRGFICVTTHPAGCEANVRQQIGYVKAKGPIADGPKRVLVIGASTGYGLAARITAAFGCGAGTLGVFFERPGSESKPGSPGWYNTAAFHRAAAQEGLYAKSINGDGFSDDVKQKTIDAIREDLGQVDLVVYSLAAPRRIHPKTGEVFNSTLKPIGKAVSLRGLDTDNEVVKDTVLEPATQKEIDDTVAVMGGEDWQMWIDALQAAGVLADGAKTTAFTYLGERITHDIYWNGSIGAAKKDLDQKVLGIRAGLAAKGGDARVSVLKAVVTQASSAIPVMPLYLSLLFKVMKAEGTHEGCIEQVHGLFADSLCGSAPHLDEEGRLRADYKELSPQVQARVTALWPQVTSQNVRELTDLAGYKAEFLRLFGFGIEGVDYEADVNPDVGIPNLVQA</sequence>
<reference key="1">
    <citation type="journal article" date="2011" name="J. Bacteriol.">
        <title>Complete genome sequence of the metabolically versatile plant growth-promoting endophyte, Variovorax paradoxus S110.</title>
        <authorList>
            <person name="Han J.I."/>
            <person name="Choi H.K."/>
            <person name="Lee S.W."/>
            <person name="Orwin P.M."/>
            <person name="Kim J."/>
            <person name="Laroe S.L."/>
            <person name="Kim T.G."/>
            <person name="O'Neil J."/>
            <person name="Leadbetter J.R."/>
            <person name="Lee S.Y."/>
            <person name="Hur C.G."/>
            <person name="Spain J.C."/>
            <person name="Ovchinnikova G."/>
            <person name="Goodwin L."/>
            <person name="Han C."/>
        </authorList>
    </citation>
    <scope>NUCLEOTIDE SEQUENCE [LARGE SCALE GENOMIC DNA]</scope>
    <source>
        <strain>S110</strain>
    </source>
</reference>
<accession>C5CWP4</accession>
<dbReference type="EC" id="1.3.1.9" evidence="1"/>
<dbReference type="EMBL" id="CP001635">
    <property type="protein sequence ID" value="ACS20651.1"/>
    <property type="molecule type" value="Genomic_DNA"/>
</dbReference>
<dbReference type="SMR" id="C5CWP4"/>
<dbReference type="STRING" id="543728.Vapar_4037"/>
<dbReference type="KEGG" id="vap:Vapar_4037"/>
<dbReference type="eggNOG" id="COG3007">
    <property type="taxonomic scope" value="Bacteria"/>
</dbReference>
<dbReference type="HOGENOM" id="CLU_057698_1_0_4"/>
<dbReference type="OrthoDB" id="9802260at2"/>
<dbReference type="UniPathway" id="UPA00094"/>
<dbReference type="GO" id="GO:0004318">
    <property type="term" value="F:enoyl-[acyl-carrier-protein] reductase (NADH) activity"/>
    <property type="evidence" value="ECO:0007669"/>
    <property type="project" value="UniProtKB-UniRule"/>
</dbReference>
<dbReference type="GO" id="GO:0051287">
    <property type="term" value="F:NAD binding"/>
    <property type="evidence" value="ECO:0007669"/>
    <property type="project" value="UniProtKB-UniRule"/>
</dbReference>
<dbReference type="GO" id="GO:0050343">
    <property type="term" value="F:trans-2-enoyl-CoA reductase (NADH) activity"/>
    <property type="evidence" value="ECO:0007669"/>
    <property type="project" value="TreeGrafter"/>
</dbReference>
<dbReference type="GO" id="GO:0006633">
    <property type="term" value="P:fatty acid biosynthetic process"/>
    <property type="evidence" value="ECO:0007669"/>
    <property type="project" value="UniProtKB-UniRule"/>
</dbReference>
<dbReference type="FunFam" id="3.40.50.720:FF:000221">
    <property type="entry name" value="Enoyl-[acyl-carrier-protein] reductase [NADH]"/>
    <property type="match status" value="1"/>
</dbReference>
<dbReference type="Gene3D" id="3.40.50.720">
    <property type="entry name" value="NAD(P)-binding Rossmann-like Domain"/>
    <property type="match status" value="1"/>
</dbReference>
<dbReference type="HAMAP" id="MF_01838">
    <property type="entry name" value="FabV_reductase"/>
    <property type="match status" value="1"/>
</dbReference>
<dbReference type="InterPro" id="IPR024906">
    <property type="entry name" value="Eno_Rdtase_FAD-bd_dom"/>
</dbReference>
<dbReference type="InterPro" id="IPR024910">
    <property type="entry name" value="Enoyl-CoA_Rdtase_cat_dom"/>
</dbReference>
<dbReference type="InterPro" id="IPR050048">
    <property type="entry name" value="FabV-like_NADH_b"/>
</dbReference>
<dbReference type="InterPro" id="IPR010758">
    <property type="entry name" value="Trans-2-enoyl-CoA_reductase"/>
</dbReference>
<dbReference type="NCBIfam" id="NF043048">
    <property type="entry name" value="EnoyACPredFabV"/>
    <property type="match status" value="1"/>
</dbReference>
<dbReference type="NCBIfam" id="NF010177">
    <property type="entry name" value="PRK13656.1"/>
    <property type="match status" value="1"/>
</dbReference>
<dbReference type="PANTHER" id="PTHR37480">
    <property type="entry name" value="ENOYL-[ACYL-CARRIER-PROTEIN] REDUCTASE [NADH]"/>
    <property type="match status" value="1"/>
</dbReference>
<dbReference type="PANTHER" id="PTHR37480:SF1">
    <property type="entry name" value="ENOYL-[ACYL-CARRIER-PROTEIN] REDUCTASE [NADH]"/>
    <property type="match status" value="1"/>
</dbReference>
<dbReference type="Pfam" id="PF07055">
    <property type="entry name" value="Eno-Rase_FAD_bd"/>
    <property type="match status" value="1"/>
</dbReference>
<dbReference type="Pfam" id="PF12242">
    <property type="entry name" value="Eno-Rase_NADH_b"/>
    <property type="match status" value="1"/>
</dbReference>
<dbReference type="Pfam" id="PF12241">
    <property type="entry name" value="Enoyl_reductase"/>
    <property type="match status" value="1"/>
</dbReference>
<gene>
    <name evidence="1" type="primary">fabV</name>
    <name type="ordered locus">Vapar_4037</name>
</gene>
<name>FABV_VARPS</name>
<proteinExistence type="inferred from homology"/>